<gene>
    <name type="primary">luxM</name>
    <name type="synonym">luxL</name>
</gene>
<accession>P54298</accession>
<accession>P54297</accession>
<feature type="chain" id="PRO_0000084525" description="Acyl-homoserine-lactone synthase LuxM">
    <location>
        <begin position="1"/>
        <end position="399"/>
    </location>
</feature>
<dbReference type="EC" id="2.3.1.184"/>
<dbReference type="EMBL" id="L13940">
    <property type="protein sequence ID" value="AAC36806.1"/>
    <property type="status" value="ALT_FRAME"/>
    <property type="molecule type" value="Genomic_RNA"/>
</dbReference>
<dbReference type="EMBL" id="L13940">
    <property type="protein sequence ID" value="AAC36807.1"/>
    <property type="status" value="ALT_FRAME"/>
    <property type="molecule type" value="Genomic_RNA"/>
</dbReference>
<dbReference type="PIR" id="S37348">
    <property type="entry name" value="S37348"/>
</dbReference>
<dbReference type="PIR" id="S37349">
    <property type="entry name" value="S37349"/>
</dbReference>
<dbReference type="GO" id="GO:0061579">
    <property type="term" value="F:N-acyl homoserine lactone synthase activity"/>
    <property type="evidence" value="ECO:0007669"/>
    <property type="project" value="UniProtKB-EC"/>
</dbReference>
<dbReference type="GO" id="GO:0009372">
    <property type="term" value="P:quorum sensing"/>
    <property type="evidence" value="ECO:0007669"/>
    <property type="project" value="UniProtKB-KW"/>
</dbReference>
<dbReference type="InterPro" id="IPR035304">
    <property type="entry name" value="AHL_synthase"/>
</dbReference>
<dbReference type="Pfam" id="PF17327">
    <property type="entry name" value="AHL_synthase"/>
    <property type="match status" value="1"/>
</dbReference>
<name>LUXM_VIBHA</name>
<sequence length="399" mass="46371">MKLMLSLGSLSANSLPIEKKQQVLIDLVIRTYQSHERTELFKAITEYRKNQLIALFPEHANKSYSIIFELMDYRDLIERYPSTLSEEATLLEKVVGQCFMHWLDFWCECEIAAIKAKFPLKENELPAPQLLFEDSAYYGALVERVEDTQLMVQIPSHPQAMPLSDAITLSNLELFIQGEKWYEMLSLLSLSQVGKHFIVLKHPVQDSCPTLVASALIQNWSVRDTWLSYAPQFSNEQWNYCFPSYGYSEFTRLQLFTPSSLSKCYSLPEFDNEFKLQLSDTQAVCEVLRLTVSGNAQQKLYFLYLAQKELMSVLHQAGYKIGFTIIEQPFMLNFYRAIDAKAYFHSGYCDLNDDGKQTYRGFWNFEMMVKAFSNIDFRGYKRAVRASRKRGSLERDEHV</sequence>
<reference key="1">
    <citation type="journal article" date="1993" name="Mol. Microbiol.">
        <title>Intercellular signalling in Vibrio harveyi: sequence and function of genes regulating expression of luminescence.</title>
        <authorList>
            <person name="Bassler B.L."/>
            <person name="Wright M.E."/>
            <person name="Showalter R.E."/>
            <person name="Silverman M.R."/>
        </authorList>
    </citation>
    <scope>NUCLEOTIDE SEQUENCE [GENOMIC RNA]</scope>
    <scope>FUNCTION IN HOMOSERINE LACTONE SYNTHESIS</scope>
    <source>
        <strain>BB7</strain>
    </source>
</reference>
<reference key="2">
    <citation type="journal article" date="2001" name="J. Bacteriol.">
        <title>The LuxM homologue VanM from Vibrio anguillarum directs the synthesis of N-(3-hydroxyhexanoyl)homoserine lactone and N-hexanoylhomoserine lactone.</title>
        <authorList>
            <person name="Milton D.L."/>
            <person name="Chalker V.J."/>
            <person name="Kirke D."/>
            <person name="Hardman A."/>
            <person name="Camara M."/>
            <person name="Williams P."/>
        </authorList>
    </citation>
    <scope>IDENTIFICATION OF FRAMESHIFT</scope>
</reference>
<keyword id="KW-0071">Autoinducer synthesis</keyword>
<keyword id="KW-0673">Quorum sensing</keyword>
<keyword id="KW-0949">S-adenosyl-L-methionine</keyword>
<keyword id="KW-0808">Transferase</keyword>
<proteinExistence type="evidence at protein level"/>
<protein>
    <recommendedName>
        <fullName>Acyl-homoserine-lactone synthase LuxM</fullName>
        <shortName>AHL synthase LuxM</shortName>
        <ecNumber>2.3.1.184</ecNumber>
    </recommendedName>
</protein>
<comment type="function">
    <text evidence="1">Required for the synthesis of an autoinducer molecule beta-hydroxybutyryl homoserine lactone, which binds to LuxN and thus acts in bioluminescence regulation.</text>
</comment>
<comment type="catalytic activity">
    <reaction>
        <text>a fatty acyl-[ACP] + S-adenosyl-L-methionine = an N-acyl-L-homoserine lactone + S-methyl-5'-thioadenosine + holo-[ACP] + H(+)</text>
        <dbReference type="Rhea" id="RHEA:10096"/>
        <dbReference type="Rhea" id="RHEA-COMP:9685"/>
        <dbReference type="Rhea" id="RHEA-COMP:14125"/>
        <dbReference type="ChEBI" id="CHEBI:15378"/>
        <dbReference type="ChEBI" id="CHEBI:17509"/>
        <dbReference type="ChEBI" id="CHEBI:55474"/>
        <dbReference type="ChEBI" id="CHEBI:59789"/>
        <dbReference type="ChEBI" id="CHEBI:64479"/>
        <dbReference type="ChEBI" id="CHEBI:138651"/>
        <dbReference type="EC" id="2.3.1.184"/>
    </reaction>
</comment>
<comment type="similarity">
    <text evidence="2">Belongs to the LuxM / VanM family.</text>
</comment>
<comment type="sequence caution" evidence="2">
    <conflict type="frameshift">
        <sequence resource="EMBL-CDS" id="AAC36806"/>
    </conflict>
</comment>
<comment type="sequence caution" evidence="2">
    <conflict type="frameshift">
        <sequence resource="EMBL-CDS" id="AAC36807"/>
    </conflict>
</comment>
<evidence type="ECO:0000269" key="1">
    <source>
    </source>
</evidence>
<evidence type="ECO:0000305" key="2"/>
<organism>
    <name type="scientific">Vibrio harveyi</name>
    <name type="common">Beneckea harveyi</name>
    <dbReference type="NCBI Taxonomy" id="669"/>
    <lineage>
        <taxon>Bacteria</taxon>
        <taxon>Pseudomonadati</taxon>
        <taxon>Pseudomonadota</taxon>
        <taxon>Gammaproteobacteria</taxon>
        <taxon>Vibrionales</taxon>
        <taxon>Vibrionaceae</taxon>
        <taxon>Vibrio</taxon>
    </lineage>
</organism>